<comment type="function">
    <text evidence="1">Proton-conducting pore forming subunit of the V0 complex of vacuolar(H+)-ATPase (V-ATPase), a multisubunit enzyme composed of a peripheral complex (V1) that hydrolyzes ATP and a membrane integral complex (V0) that translocates protons (By similarity). V-ATPase is responsible for acidifying and maintaining the pH of intracellular compartments (By similarity).</text>
</comment>
<comment type="subunit">
    <text evidence="1">V-ATPase is a heteromultimeric enzyme composed of a peripheral catalytic V1 complex (components A to H) attached to an integral membrane V0 proton pore complex (components: a, c, c', c'', d, e, f and VOA1) (By similarity). The decameric c-ring forms the proton-conducting pore, and is composed of eight proteolipid subunits c, one subunit c' and one subunit c'' (By similarity).</text>
</comment>
<comment type="subcellular location">
    <subcellularLocation>
        <location evidence="1">Vacuole membrane</location>
        <topology evidence="2">Multi-pass membrane protein</topology>
    </subcellularLocation>
</comment>
<comment type="similarity">
    <text evidence="4">Belongs to the V-ATPase proteolipid subunit family.</text>
</comment>
<protein>
    <recommendedName>
        <fullName evidence="3">V-type proton ATPase subunit c</fullName>
        <shortName evidence="3">V-ATPase subunit c</shortName>
    </recommendedName>
    <alternativeName>
        <fullName>V-type proton ATPase 16 kDa proteolipid subunit</fullName>
        <shortName>V-ATPase 16 kDa proteolipid subunit</shortName>
    </alternativeName>
    <alternativeName>
        <fullName evidence="1">Vacuolar proton pump c subunit</fullName>
    </alternativeName>
</protein>
<evidence type="ECO:0000250" key="1">
    <source>
        <dbReference type="UniProtKB" id="P25515"/>
    </source>
</evidence>
<evidence type="ECO:0000255" key="2"/>
<evidence type="ECO:0000303" key="3">
    <source ref="1"/>
</evidence>
<evidence type="ECO:0000305" key="4"/>
<name>VATL1_CANTR</name>
<reference key="1">
    <citation type="submission" date="1994-01" db="EMBL/GenBank/DDBJ databases">
        <title>Structure and expression of the vacuolar ATPase subunit c gene from Candida tropicalis.</title>
        <authorList>
            <person name="Gu H.H."/>
            <person name="Xu J."/>
            <person name="Dean G.E."/>
        </authorList>
    </citation>
    <scope>NUCLEOTIDE SEQUENCE [GENOMIC DNA]</scope>
</reference>
<accession>Q00607</accession>
<proteinExistence type="inferred from homology"/>
<gene>
    <name type="primary">VMA3</name>
</gene>
<dbReference type="EMBL" id="U02877">
    <property type="protein sequence ID" value="AAA03446.1"/>
    <property type="molecule type" value="Unassigned_DNA"/>
</dbReference>
<dbReference type="SMR" id="Q00607"/>
<dbReference type="EnsemblFungi" id="CTRG_02310-t43_1">
    <property type="protein sequence ID" value="CTRG_02310-t43_1-p1"/>
    <property type="gene ID" value="CTRG_02310"/>
</dbReference>
<dbReference type="VEuPathDB" id="FungiDB:CTMYA2_049920"/>
<dbReference type="VEuPathDB" id="FungiDB:CTRG_02310"/>
<dbReference type="GO" id="GO:0000220">
    <property type="term" value="C:vacuolar proton-transporting V-type ATPase, V0 domain"/>
    <property type="evidence" value="ECO:0007669"/>
    <property type="project" value="EnsemblFungi"/>
</dbReference>
<dbReference type="GO" id="GO:0046961">
    <property type="term" value="F:proton-transporting ATPase activity, rotational mechanism"/>
    <property type="evidence" value="ECO:0007669"/>
    <property type="project" value="InterPro"/>
</dbReference>
<dbReference type="GO" id="GO:0006897">
    <property type="term" value="P:endocytosis"/>
    <property type="evidence" value="ECO:0007669"/>
    <property type="project" value="EnsemblFungi"/>
</dbReference>
<dbReference type="GO" id="GO:0006878">
    <property type="term" value="P:intracellular copper ion homeostasis"/>
    <property type="evidence" value="ECO:0007669"/>
    <property type="project" value="EnsemblFungi"/>
</dbReference>
<dbReference type="GO" id="GO:0006879">
    <property type="term" value="P:intracellular iron ion homeostasis"/>
    <property type="evidence" value="ECO:0007669"/>
    <property type="project" value="EnsemblFungi"/>
</dbReference>
<dbReference type="GO" id="GO:0006623">
    <property type="term" value="P:protein targeting to vacuole"/>
    <property type="evidence" value="ECO:0007669"/>
    <property type="project" value="EnsemblFungi"/>
</dbReference>
<dbReference type="GO" id="GO:0007035">
    <property type="term" value="P:vacuolar acidification"/>
    <property type="evidence" value="ECO:0007669"/>
    <property type="project" value="EnsemblFungi"/>
</dbReference>
<dbReference type="GO" id="GO:0007033">
    <property type="term" value="P:vacuole organization"/>
    <property type="evidence" value="ECO:0007669"/>
    <property type="project" value="EnsemblFungi"/>
</dbReference>
<dbReference type="CDD" id="cd18175">
    <property type="entry name" value="ATP-synt_Vo_c_ATP6C_rpt1"/>
    <property type="match status" value="1"/>
</dbReference>
<dbReference type="CDD" id="cd18176">
    <property type="entry name" value="ATP-synt_Vo_c_ATP6C_rpt2"/>
    <property type="match status" value="1"/>
</dbReference>
<dbReference type="FunFam" id="1.20.120.610:FF:000001">
    <property type="entry name" value="V-type proton ATPase proteolipid subunit"/>
    <property type="match status" value="1"/>
</dbReference>
<dbReference type="Gene3D" id="1.20.120.610">
    <property type="entry name" value="lithium bound rotor ring of v- atpase"/>
    <property type="match status" value="1"/>
</dbReference>
<dbReference type="InterPro" id="IPR002379">
    <property type="entry name" value="ATPase_proteolipid_c-like_dom"/>
</dbReference>
<dbReference type="InterPro" id="IPR000245">
    <property type="entry name" value="ATPase_proteolipid_csu"/>
</dbReference>
<dbReference type="InterPro" id="IPR011555">
    <property type="entry name" value="ATPase_proteolipid_su_C_euk"/>
</dbReference>
<dbReference type="InterPro" id="IPR035921">
    <property type="entry name" value="F/V-ATP_Csub_sf"/>
</dbReference>
<dbReference type="NCBIfam" id="TIGR01100">
    <property type="entry name" value="V_ATP_synt_C"/>
    <property type="match status" value="1"/>
</dbReference>
<dbReference type="PANTHER" id="PTHR10263">
    <property type="entry name" value="V-TYPE PROTON ATPASE PROTEOLIPID SUBUNIT"/>
    <property type="match status" value="1"/>
</dbReference>
<dbReference type="Pfam" id="PF00137">
    <property type="entry name" value="ATP-synt_C"/>
    <property type="match status" value="2"/>
</dbReference>
<dbReference type="PRINTS" id="PR00122">
    <property type="entry name" value="VACATPASE"/>
</dbReference>
<dbReference type="SUPFAM" id="SSF81333">
    <property type="entry name" value="F1F0 ATP synthase subunit C"/>
    <property type="match status" value="2"/>
</dbReference>
<sequence length="160" mass="16222">MSDLCPVYAPFFGSIGCAAAIVFTCFGASYGTAKSGVGICATSVTRPDLLVKNVVPVVMAGIIAIYGLVVSVLVSDSLSQKQALYTGFIQLGAGLSVGLSGLAAGFAIGIVGDAGVRGTAQQPRLFVGMILILIFAEVLGLYGLIVALLLNSRASQDVTC</sequence>
<feature type="chain" id="PRO_0000071759" description="V-type proton ATPase subunit c">
    <location>
        <begin position="1"/>
        <end position="160"/>
    </location>
</feature>
<feature type="topological domain" description="Lumenal" evidence="2">
    <location>
        <begin position="1"/>
        <end position="6"/>
    </location>
</feature>
<feature type="transmembrane region" description="Helical" evidence="2">
    <location>
        <begin position="7"/>
        <end position="27"/>
    </location>
</feature>
<feature type="topological domain" description="Cytoplasmic" evidence="2">
    <location>
        <begin position="28"/>
        <end position="53"/>
    </location>
</feature>
<feature type="transmembrane region" description="Helical" evidence="2">
    <location>
        <begin position="54"/>
        <end position="74"/>
    </location>
</feature>
<feature type="topological domain" description="Lumenal" evidence="2">
    <location>
        <begin position="75"/>
        <end position="90"/>
    </location>
</feature>
<feature type="transmembrane region" description="Helical" evidence="2">
    <location>
        <begin position="91"/>
        <end position="111"/>
    </location>
</feature>
<feature type="topological domain" description="Cytoplasmic" evidence="2">
    <location>
        <begin position="112"/>
        <end position="129"/>
    </location>
</feature>
<feature type="transmembrane region" description="Helical" evidence="2">
    <location>
        <begin position="130"/>
        <end position="150"/>
    </location>
</feature>
<feature type="topological domain" description="Lumenal" evidence="2">
    <location>
        <begin position="151"/>
        <end position="160"/>
    </location>
</feature>
<feature type="site" description="Essential for proton translocation" evidence="1">
    <location>
        <position position="137"/>
    </location>
</feature>
<keyword id="KW-0375">Hydrogen ion transport</keyword>
<keyword id="KW-0406">Ion transport</keyword>
<keyword id="KW-0472">Membrane</keyword>
<keyword id="KW-0812">Transmembrane</keyword>
<keyword id="KW-1133">Transmembrane helix</keyword>
<keyword id="KW-0813">Transport</keyword>
<keyword id="KW-0926">Vacuole</keyword>
<organism>
    <name type="scientific">Candida tropicalis</name>
    <name type="common">Yeast</name>
    <dbReference type="NCBI Taxonomy" id="5482"/>
    <lineage>
        <taxon>Eukaryota</taxon>
        <taxon>Fungi</taxon>
        <taxon>Dikarya</taxon>
        <taxon>Ascomycota</taxon>
        <taxon>Saccharomycotina</taxon>
        <taxon>Pichiomycetes</taxon>
        <taxon>Debaryomycetaceae</taxon>
        <taxon>Candida/Lodderomyces clade</taxon>
        <taxon>Candida</taxon>
    </lineage>
</organism>